<feature type="chain" id="PRO_0000226168" description="Ketol-acid reductoisomerase (NADP(+))">
    <location>
        <begin position="1"/>
        <end position="338"/>
    </location>
</feature>
<feature type="domain" description="KARI N-terminal Rossmann" evidence="2">
    <location>
        <begin position="1"/>
        <end position="181"/>
    </location>
</feature>
<feature type="domain" description="KARI C-terminal knotted" evidence="3">
    <location>
        <begin position="182"/>
        <end position="327"/>
    </location>
</feature>
<feature type="active site" evidence="1">
    <location>
        <position position="107"/>
    </location>
</feature>
<feature type="binding site" evidence="1">
    <location>
        <begin position="24"/>
        <end position="27"/>
    </location>
    <ligand>
        <name>NADP(+)</name>
        <dbReference type="ChEBI" id="CHEBI:58349"/>
    </ligand>
</feature>
<feature type="binding site" evidence="1">
    <location>
        <position position="47"/>
    </location>
    <ligand>
        <name>NADP(+)</name>
        <dbReference type="ChEBI" id="CHEBI:58349"/>
    </ligand>
</feature>
<feature type="binding site" evidence="1">
    <location>
        <position position="52"/>
    </location>
    <ligand>
        <name>NADP(+)</name>
        <dbReference type="ChEBI" id="CHEBI:58349"/>
    </ligand>
</feature>
<feature type="binding site" evidence="1">
    <location>
        <position position="133"/>
    </location>
    <ligand>
        <name>NADP(+)</name>
        <dbReference type="ChEBI" id="CHEBI:58349"/>
    </ligand>
</feature>
<feature type="binding site" evidence="1">
    <location>
        <position position="190"/>
    </location>
    <ligand>
        <name>Mg(2+)</name>
        <dbReference type="ChEBI" id="CHEBI:18420"/>
        <label>1</label>
    </ligand>
</feature>
<feature type="binding site" evidence="1">
    <location>
        <position position="190"/>
    </location>
    <ligand>
        <name>Mg(2+)</name>
        <dbReference type="ChEBI" id="CHEBI:18420"/>
        <label>2</label>
    </ligand>
</feature>
<feature type="binding site" evidence="1">
    <location>
        <position position="194"/>
    </location>
    <ligand>
        <name>Mg(2+)</name>
        <dbReference type="ChEBI" id="CHEBI:18420"/>
        <label>1</label>
    </ligand>
</feature>
<feature type="binding site" evidence="1">
    <location>
        <position position="226"/>
    </location>
    <ligand>
        <name>Mg(2+)</name>
        <dbReference type="ChEBI" id="CHEBI:18420"/>
        <label>2</label>
    </ligand>
</feature>
<feature type="binding site" evidence="1">
    <location>
        <position position="230"/>
    </location>
    <ligand>
        <name>Mg(2+)</name>
        <dbReference type="ChEBI" id="CHEBI:18420"/>
        <label>2</label>
    </ligand>
</feature>
<feature type="binding site" evidence="1">
    <location>
        <position position="251"/>
    </location>
    <ligand>
        <name>substrate</name>
    </ligand>
</feature>
<evidence type="ECO:0000255" key="1">
    <source>
        <dbReference type="HAMAP-Rule" id="MF_00435"/>
    </source>
</evidence>
<evidence type="ECO:0000255" key="2">
    <source>
        <dbReference type="PROSITE-ProRule" id="PRU01197"/>
    </source>
</evidence>
<evidence type="ECO:0000255" key="3">
    <source>
        <dbReference type="PROSITE-ProRule" id="PRU01198"/>
    </source>
</evidence>
<comment type="function">
    <text evidence="1">Involved in the biosynthesis of branched-chain amino acids (BCAA). Catalyzes an alkyl-migration followed by a ketol-acid reduction of (S)-2-acetolactate (S2AL) to yield (R)-2,3-dihydroxy-isovalerate. In the isomerase reaction, S2AL is rearranged via a Mg-dependent methyl migration to produce 3-hydroxy-3-methyl-2-ketobutyrate (HMKB). In the reductase reaction, this 2-ketoacid undergoes a metal-dependent reduction by NADPH to yield (R)-2,3-dihydroxy-isovalerate.</text>
</comment>
<comment type="catalytic activity">
    <reaction evidence="1">
        <text>(2R)-2,3-dihydroxy-3-methylbutanoate + NADP(+) = (2S)-2-acetolactate + NADPH + H(+)</text>
        <dbReference type="Rhea" id="RHEA:22068"/>
        <dbReference type="ChEBI" id="CHEBI:15378"/>
        <dbReference type="ChEBI" id="CHEBI:49072"/>
        <dbReference type="ChEBI" id="CHEBI:57783"/>
        <dbReference type="ChEBI" id="CHEBI:58349"/>
        <dbReference type="ChEBI" id="CHEBI:58476"/>
        <dbReference type="EC" id="1.1.1.86"/>
    </reaction>
</comment>
<comment type="catalytic activity">
    <reaction evidence="1">
        <text>(2R,3R)-2,3-dihydroxy-3-methylpentanoate + NADP(+) = (S)-2-ethyl-2-hydroxy-3-oxobutanoate + NADPH + H(+)</text>
        <dbReference type="Rhea" id="RHEA:13493"/>
        <dbReference type="ChEBI" id="CHEBI:15378"/>
        <dbReference type="ChEBI" id="CHEBI:49256"/>
        <dbReference type="ChEBI" id="CHEBI:49258"/>
        <dbReference type="ChEBI" id="CHEBI:57783"/>
        <dbReference type="ChEBI" id="CHEBI:58349"/>
        <dbReference type="EC" id="1.1.1.86"/>
    </reaction>
</comment>
<comment type="cofactor">
    <cofactor evidence="1">
        <name>Mg(2+)</name>
        <dbReference type="ChEBI" id="CHEBI:18420"/>
    </cofactor>
    <text evidence="1">Binds 2 magnesium ions per subunit.</text>
</comment>
<comment type="pathway">
    <text evidence="1">Amino-acid biosynthesis; L-isoleucine biosynthesis; L-isoleucine from 2-oxobutanoate: step 2/4.</text>
</comment>
<comment type="pathway">
    <text evidence="1">Amino-acid biosynthesis; L-valine biosynthesis; L-valine from pyruvate: step 2/4.</text>
</comment>
<comment type="similarity">
    <text evidence="1">Belongs to the ketol-acid reductoisomerase family.</text>
</comment>
<proteinExistence type="inferred from homology"/>
<sequence length="338" mass="36284">MNVFYDKDADLSLIKGKQVTIIGYGSQGHAHALNLKDSGVNVTVGLRKGGASWSKAENAGLSVKEVAEAVKSADVVMMLLPDEQIADVYAKEVHANIKQGAALAFAHGFNVHYGAVIPRADLDVIMIAPKAPGHTVRGTYSQGGGVPHLIAVAQNKSGAARDIALSYAAANGGGRAGIIETNFREETETDLFGEQAVLCGGTVELIKAGFETLVEAGYAPEMAYFECLHELKLIVDLIYEGGIANMNYSISNNAEYGEYVTGPRIVTEETKKAMKQCLTDIQTGEYAKSFILENKAGAPTLQSRRRLTAEHQIEQVGAKLRAMMPWIAKNKLVDQSKN</sequence>
<accession>Q39ED2</accession>
<gene>
    <name evidence="1" type="primary">ilvC</name>
    <name type="ordered locus">Bcep18194_A5590</name>
</gene>
<reference key="1">
    <citation type="submission" date="2005-10" db="EMBL/GenBank/DDBJ databases">
        <title>Complete sequence of chromosome 1 of Burkholderia sp. 383.</title>
        <authorList>
            <consortium name="US DOE Joint Genome Institute"/>
            <person name="Copeland A."/>
            <person name="Lucas S."/>
            <person name="Lapidus A."/>
            <person name="Barry K."/>
            <person name="Detter J.C."/>
            <person name="Glavina T."/>
            <person name="Hammon N."/>
            <person name="Israni S."/>
            <person name="Pitluck S."/>
            <person name="Chain P."/>
            <person name="Malfatti S."/>
            <person name="Shin M."/>
            <person name="Vergez L."/>
            <person name="Schmutz J."/>
            <person name="Larimer F."/>
            <person name="Land M."/>
            <person name="Kyrpides N."/>
            <person name="Lykidis A."/>
            <person name="Richardson P."/>
        </authorList>
    </citation>
    <scope>NUCLEOTIDE SEQUENCE [LARGE SCALE GENOMIC DNA]</scope>
    <source>
        <strain>ATCC 17760 / DSM 23089 / LMG 22485 / NCIMB 9086 / R18194 / 383</strain>
    </source>
</reference>
<dbReference type="EC" id="1.1.1.86" evidence="1"/>
<dbReference type="EMBL" id="CP000151">
    <property type="protein sequence ID" value="ABB09184.1"/>
    <property type="molecule type" value="Genomic_DNA"/>
</dbReference>
<dbReference type="RefSeq" id="WP_011352711.1">
    <property type="nucleotide sequence ID" value="NC_007510.1"/>
</dbReference>
<dbReference type="SMR" id="Q39ED2"/>
<dbReference type="GeneID" id="45095477"/>
<dbReference type="KEGG" id="bur:Bcep18194_A5590"/>
<dbReference type="PATRIC" id="fig|482957.22.peg.2556"/>
<dbReference type="HOGENOM" id="CLU_033821_0_1_4"/>
<dbReference type="UniPathway" id="UPA00047">
    <property type="reaction ID" value="UER00056"/>
</dbReference>
<dbReference type="UniPathway" id="UPA00049">
    <property type="reaction ID" value="UER00060"/>
</dbReference>
<dbReference type="Proteomes" id="UP000002705">
    <property type="component" value="Chromosome 1"/>
</dbReference>
<dbReference type="GO" id="GO:0005829">
    <property type="term" value="C:cytosol"/>
    <property type="evidence" value="ECO:0007669"/>
    <property type="project" value="TreeGrafter"/>
</dbReference>
<dbReference type="GO" id="GO:0004455">
    <property type="term" value="F:ketol-acid reductoisomerase activity"/>
    <property type="evidence" value="ECO:0007669"/>
    <property type="project" value="UniProtKB-UniRule"/>
</dbReference>
<dbReference type="GO" id="GO:0000287">
    <property type="term" value="F:magnesium ion binding"/>
    <property type="evidence" value="ECO:0007669"/>
    <property type="project" value="UniProtKB-UniRule"/>
</dbReference>
<dbReference type="GO" id="GO:0050661">
    <property type="term" value="F:NADP binding"/>
    <property type="evidence" value="ECO:0007669"/>
    <property type="project" value="InterPro"/>
</dbReference>
<dbReference type="GO" id="GO:0009097">
    <property type="term" value="P:isoleucine biosynthetic process"/>
    <property type="evidence" value="ECO:0007669"/>
    <property type="project" value="UniProtKB-UniRule"/>
</dbReference>
<dbReference type="GO" id="GO:0009099">
    <property type="term" value="P:L-valine biosynthetic process"/>
    <property type="evidence" value="ECO:0007669"/>
    <property type="project" value="UniProtKB-UniRule"/>
</dbReference>
<dbReference type="FunFam" id="3.40.50.720:FF:000023">
    <property type="entry name" value="Ketol-acid reductoisomerase (NADP(+))"/>
    <property type="match status" value="1"/>
</dbReference>
<dbReference type="Gene3D" id="6.10.240.10">
    <property type="match status" value="1"/>
</dbReference>
<dbReference type="Gene3D" id="3.40.50.720">
    <property type="entry name" value="NAD(P)-binding Rossmann-like Domain"/>
    <property type="match status" value="1"/>
</dbReference>
<dbReference type="HAMAP" id="MF_00435">
    <property type="entry name" value="IlvC"/>
    <property type="match status" value="1"/>
</dbReference>
<dbReference type="InterPro" id="IPR008927">
    <property type="entry name" value="6-PGluconate_DH-like_C_sf"/>
</dbReference>
<dbReference type="InterPro" id="IPR013023">
    <property type="entry name" value="KARI"/>
</dbReference>
<dbReference type="InterPro" id="IPR000506">
    <property type="entry name" value="KARI_C"/>
</dbReference>
<dbReference type="InterPro" id="IPR013116">
    <property type="entry name" value="KARI_N"/>
</dbReference>
<dbReference type="InterPro" id="IPR014359">
    <property type="entry name" value="KARI_prok"/>
</dbReference>
<dbReference type="InterPro" id="IPR036291">
    <property type="entry name" value="NAD(P)-bd_dom_sf"/>
</dbReference>
<dbReference type="NCBIfam" id="TIGR00465">
    <property type="entry name" value="ilvC"/>
    <property type="match status" value="1"/>
</dbReference>
<dbReference type="NCBIfam" id="NF004017">
    <property type="entry name" value="PRK05479.1"/>
    <property type="match status" value="1"/>
</dbReference>
<dbReference type="NCBIfam" id="NF009940">
    <property type="entry name" value="PRK13403.1"/>
    <property type="match status" value="1"/>
</dbReference>
<dbReference type="PANTHER" id="PTHR21371">
    <property type="entry name" value="KETOL-ACID REDUCTOISOMERASE, MITOCHONDRIAL"/>
    <property type="match status" value="1"/>
</dbReference>
<dbReference type="PANTHER" id="PTHR21371:SF1">
    <property type="entry name" value="KETOL-ACID REDUCTOISOMERASE, MITOCHONDRIAL"/>
    <property type="match status" value="1"/>
</dbReference>
<dbReference type="Pfam" id="PF01450">
    <property type="entry name" value="KARI_C"/>
    <property type="match status" value="1"/>
</dbReference>
<dbReference type="Pfam" id="PF07991">
    <property type="entry name" value="KARI_N"/>
    <property type="match status" value="1"/>
</dbReference>
<dbReference type="PIRSF" id="PIRSF000116">
    <property type="entry name" value="IlvC_gammaproteo"/>
    <property type="match status" value="1"/>
</dbReference>
<dbReference type="SUPFAM" id="SSF48179">
    <property type="entry name" value="6-phosphogluconate dehydrogenase C-terminal domain-like"/>
    <property type="match status" value="1"/>
</dbReference>
<dbReference type="SUPFAM" id="SSF51735">
    <property type="entry name" value="NAD(P)-binding Rossmann-fold domains"/>
    <property type="match status" value="1"/>
</dbReference>
<dbReference type="PROSITE" id="PS51851">
    <property type="entry name" value="KARI_C"/>
    <property type="match status" value="1"/>
</dbReference>
<dbReference type="PROSITE" id="PS51850">
    <property type="entry name" value="KARI_N"/>
    <property type="match status" value="1"/>
</dbReference>
<organism>
    <name type="scientific">Burkholderia lata (strain ATCC 17760 / DSM 23089 / LMG 22485 / NCIMB 9086 / R18194 / 383)</name>
    <dbReference type="NCBI Taxonomy" id="482957"/>
    <lineage>
        <taxon>Bacteria</taxon>
        <taxon>Pseudomonadati</taxon>
        <taxon>Pseudomonadota</taxon>
        <taxon>Betaproteobacteria</taxon>
        <taxon>Burkholderiales</taxon>
        <taxon>Burkholderiaceae</taxon>
        <taxon>Burkholderia</taxon>
        <taxon>Burkholderia cepacia complex</taxon>
    </lineage>
</organism>
<name>ILVC_BURL3</name>
<keyword id="KW-0028">Amino-acid biosynthesis</keyword>
<keyword id="KW-0100">Branched-chain amino acid biosynthesis</keyword>
<keyword id="KW-0460">Magnesium</keyword>
<keyword id="KW-0479">Metal-binding</keyword>
<keyword id="KW-0521">NADP</keyword>
<keyword id="KW-0560">Oxidoreductase</keyword>
<protein>
    <recommendedName>
        <fullName evidence="1">Ketol-acid reductoisomerase (NADP(+))</fullName>
        <shortName evidence="1">KARI</shortName>
        <ecNumber evidence="1">1.1.1.86</ecNumber>
    </recommendedName>
    <alternativeName>
        <fullName evidence="1">Acetohydroxy-acid isomeroreductase</fullName>
        <shortName evidence="1">AHIR</shortName>
    </alternativeName>
    <alternativeName>
        <fullName evidence="1">Alpha-keto-beta-hydroxylacyl reductoisomerase</fullName>
    </alternativeName>
    <alternativeName>
        <fullName evidence="1">Ketol-acid reductoisomerase type 1</fullName>
    </alternativeName>
    <alternativeName>
        <fullName evidence="1">Ketol-acid reductoisomerase type I</fullName>
    </alternativeName>
</protein>